<proteinExistence type="inferred from homology"/>
<protein>
    <recommendedName>
        <fullName evidence="1">Beta-ketoacyl-[acyl-carrier-protein] synthase III</fullName>
        <shortName evidence="1">Beta-ketoacyl-ACP synthase III</shortName>
        <shortName evidence="1">KAS III</shortName>
        <ecNumber evidence="1">2.3.1.180</ecNumber>
    </recommendedName>
    <alternativeName>
        <fullName evidence="1">3-oxoacyl-[acyl-carrier-protein] synthase 3</fullName>
    </alternativeName>
    <alternativeName>
        <fullName evidence="1">3-oxoacyl-[acyl-carrier-protein] synthase III</fullName>
    </alternativeName>
</protein>
<sequence length="321" mass="33455">MIHARIAGTGSYLPGNPVSNDDLVARGIDTSDDWVVSRTGIRTRYLAPPDVGSSDLALVAAQRAIEAAGCAANDIDLIIVATSTPDYIFPSTATLLQSKLGIGNNGAAFDVQAVCSGFVYALSIAEKFIRSGSHKRALVVGAEVFSRILDWTDRATCVLFGDGAGAVVLEASERPGVLTTALHADGSHHPILCVPGNVATGQVVGDPFLRMDGQAVFKFAVKVLGDVAHEVLDAAGVAADSVDWLIPHQANIRIIQATAKRLGLSMEKVVATVDRHGNTSAASIPLALDLAVRDGRIRPGQRVVVEGVGGGFTWGAALIDF</sequence>
<comment type="function">
    <text evidence="1">Catalyzes the condensation reaction of fatty acid synthesis by the addition to an acyl acceptor of two carbons from malonyl-ACP. Catalyzes the first condensation reaction which initiates fatty acid synthesis and may therefore play a role in governing the total rate of fatty acid production. Possesses both acetoacetyl-ACP synthase and acetyl transacylase activities. Its substrate specificity determines the biosynthesis of branched-chain and/or straight-chain of fatty acids.</text>
</comment>
<comment type="catalytic activity">
    <reaction evidence="1">
        <text>malonyl-[ACP] + acetyl-CoA + H(+) = 3-oxobutanoyl-[ACP] + CO2 + CoA</text>
        <dbReference type="Rhea" id="RHEA:12080"/>
        <dbReference type="Rhea" id="RHEA-COMP:9623"/>
        <dbReference type="Rhea" id="RHEA-COMP:9625"/>
        <dbReference type="ChEBI" id="CHEBI:15378"/>
        <dbReference type="ChEBI" id="CHEBI:16526"/>
        <dbReference type="ChEBI" id="CHEBI:57287"/>
        <dbReference type="ChEBI" id="CHEBI:57288"/>
        <dbReference type="ChEBI" id="CHEBI:78449"/>
        <dbReference type="ChEBI" id="CHEBI:78450"/>
        <dbReference type="EC" id="2.3.1.180"/>
    </reaction>
</comment>
<comment type="pathway">
    <text evidence="1">Lipid metabolism; fatty acid biosynthesis.</text>
</comment>
<comment type="subunit">
    <text evidence="1">Homodimer.</text>
</comment>
<comment type="subcellular location">
    <subcellularLocation>
        <location evidence="1">Cytoplasm</location>
    </subcellularLocation>
</comment>
<comment type="domain">
    <text evidence="1">The last Arg residue of the ACP-binding site is essential for the weak association between ACP/AcpP and FabH.</text>
</comment>
<comment type="similarity">
    <text evidence="1">Belongs to the thiolase-like superfamily. FabH family.</text>
</comment>
<dbReference type="EC" id="2.3.1.180" evidence="1"/>
<dbReference type="EMBL" id="AM406670">
    <property type="protein sequence ID" value="CAL94240.1"/>
    <property type="molecule type" value="Genomic_DNA"/>
</dbReference>
<dbReference type="RefSeq" id="WP_011765356.1">
    <property type="nucleotide sequence ID" value="NC_008702.1"/>
</dbReference>
<dbReference type="SMR" id="A1K5Y5"/>
<dbReference type="STRING" id="62928.azo1623"/>
<dbReference type="KEGG" id="aoa:dqs_1748"/>
<dbReference type="KEGG" id="azo:azo1623"/>
<dbReference type="eggNOG" id="COG0332">
    <property type="taxonomic scope" value="Bacteria"/>
</dbReference>
<dbReference type="HOGENOM" id="CLU_039592_3_1_4"/>
<dbReference type="OrthoDB" id="9815506at2"/>
<dbReference type="UniPathway" id="UPA00094"/>
<dbReference type="Proteomes" id="UP000002588">
    <property type="component" value="Chromosome"/>
</dbReference>
<dbReference type="GO" id="GO:0005737">
    <property type="term" value="C:cytoplasm"/>
    <property type="evidence" value="ECO:0007669"/>
    <property type="project" value="UniProtKB-SubCell"/>
</dbReference>
<dbReference type="GO" id="GO:0004315">
    <property type="term" value="F:3-oxoacyl-[acyl-carrier-protein] synthase activity"/>
    <property type="evidence" value="ECO:0007669"/>
    <property type="project" value="InterPro"/>
</dbReference>
<dbReference type="GO" id="GO:0033818">
    <property type="term" value="F:beta-ketoacyl-acyl-carrier-protein synthase III activity"/>
    <property type="evidence" value="ECO:0007669"/>
    <property type="project" value="UniProtKB-UniRule"/>
</dbReference>
<dbReference type="GO" id="GO:0006633">
    <property type="term" value="P:fatty acid biosynthetic process"/>
    <property type="evidence" value="ECO:0007669"/>
    <property type="project" value="UniProtKB-UniRule"/>
</dbReference>
<dbReference type="CDD" id="cd00830">
    <property type="entry name" value="KAS_III"/>
    <property type="match status" value="1"/>
</dbReference>
<dbReference type="FunFam" id="3.40.47.10:FF:000004">
    <property type="entry name" value="3-oxoacyl-[acyl-carrier-protein] synthase 3"/>
    <property type="match status" value="1"/>
</dbReference>
<dbReference type="Gene3D" id="3.40.47.10">
    <property type="match status" value="1"/>
</dbReference>
<dbReference type="HAMAP" id="MF_01815">
    <property type="entry name" value="FabH"/>
    <property type="match status" value="1"/>
</dbReference>
<dbReference type="InterPro" id="IPR013747">
    <property type="entry name" value="ACP_syn_III_C"/>
</dbReference>
<dbReference type="InterPro" id="IPR013751">
    <property type="entry name" value="ACP_syn_III_N"/>
</dbReference>
<dbReference type="InterPro" id="IPR004655">
    <property type="entry name" value="FabH"/>
</dbReference>
<dbReference type="InterPro" id="IPR016039">
    <property type="entry name" value="Thiolase-like"/>
</dbReference>
<dbReference type="NCBIfam" id="TIGR00747">
    <property type="entry name" value="fabH"/>
    <property type="match status" value="1"/>
</dbReference>
<dbReference type="NCBIfam" id="NF006829">
    <property type="entry name" value="PRK09352.1"/>
    <property type="match status" value="1"/>
</dbReference>
<dbReference type="PANTHER" id="PTHR43091">
    <property type="entry name" value="3-OXOACYL-[ACYL-CARRIER-PROTEIN] SYNTHASE"/>
    <property type="match status" value="1"/>
</dbReference>
<dbReference type="PANTHER" id="PTHR43091:SF1">
    <property type="entry name" value="BETA-KETOACYL-[ACYL-CARRIER-PROTEIN] SYNTHASE III, CHLOROPLASTIC"/>
    <property type="match status" value="1"/>
</dbReference>
<dbReference type="Pfam" id="PF08545">
    <property type="entry name" value="ACP_syn_III"/>
    <property type="match status" value="1"/>
</dbReference>
<dbReference type="Pfam" id="PF08541">
    <property type="entry name" value="ACP_syn_III_C"/>
    <property type="match status" value="1"/>
</dbReference>
<dbReference type="SUPFAM" id="SSF53901">
    <property type="entry name" value="Thiolase-like"/>
    <property type="match status" value="1"/>
</dbReference>
<organism>
    <name type="scientific">Azoarcus sp. (strain BH72)</name>
    <dbReference type="NCBI Taxonomy" id="418699"/>
    <lineage>
        <taxon>Bacteria</taxon>
        <taxon>Pseudomonadati</taxon>
        <taxon>Pseudomonadota</taxon>
        <taxon>Betaproteobacteria</taxon>
        <taxon>Rhodocyclales</taxon>
        <taxon>Zoogloeaceae</taxon>
        <taxon>Azoarcus</taxon>
    </lineage>
</organism>
<evidence type="ECO:0000255" key="1">
    <source>
        <dbReference type="HAMAP-Rule" id="MF_01815"/>
    </source>
</evidence>
<reference key="1">
    <citation type="journal article" date="2006" name="Nat. Biotechnol.">
        <title>Complete genome of the mutualistic, N2-fixing grass endophyte Azoarcus sp. strain BH72.</title>
        <authorList>
            <person name="Krause A."/>
            <person name="Ramakumar A."/>
            <person name="Bartels D."/>
            <person name="Battistoni F."/>
            <person name="Bekel T."/>
            <person name="Boch J."/>
            <person name="Boehm M."/>
            <person name="Friedrich F."/>
            <person name="Hurek T."/>
            <person name="Krause L."/>
            <person name="Linke B."/>
            <person name="McHardy A.C."/>
            <person name="Sarkar A."/>
            <person name="Schneiker S."/>
            <person name="Syed A.A."/>
            <person name="Thauer R."/>
            <person name="Vorhoelter F.-J."/>
            <person name="Weidner S."/>
            <person name="Puehler A."/>
            <person name="Reinhold-Hurek B."/>
            <person name="Kaiser O."/>
            <person name="Goesmann A."/>
        </authorList>
    </citation>
    <scope>NUCLEOTIDE SEQUENCE [LARGE SCALE GENOMIC DNA]</scope>
    <source>
        <strain>BH72</strain>
    </source>
</reference>
<accession>A1K5Y5</accession>
<gene>
    <name evidence="1" type="primary">fabH</name>
    <name type="ordered locus">azo1623</name>
</gene>
<feature type="chain" id="PRO_1000056324" description="Beta-ketoacyl-[acyl-carrier-protein] synthase III">
    <location>
        <begin position="1"/>
        <end position="321"/>
    </location>
</feature>
<feature type="region of interest" description="ACP-binding" evidence="1">
    <location>
        <begin position="249"/>
        <end position="253"/>
    </location>
</feature>
<feature type="active site" evidence="1">
    <location>
        <position position="115"/>
    </location>
</feature>
<feature type="active site" evidence="1">
    <location>
        <position position="248"/>
    </location>
</feature>
<feature type="active site" evidence="1">
    <location>
        <position position="278"/>
    </location>
</feature>
<keyword id="KW-0012">Acyltransferase</keyword>
<keyword id="KW-0963">Cytoplasm</keyword>
<keyword id="KW-0275">Fatty acid biosynthesis</keyword>
<keyword id="KW-0276">Fatty acid metabolism</keyword>
<keyword id="KW-0444">Lipid biosynthesis</keyword>
<keyword id="KW-0443">Lipid metabolism</keyword>
<keyword id="KW-0511">Multifunctional enzyme</keyword>
<keyword id="KW-1185">Reference proteome</keyword>
<keyword id="KW-0808">Transferase</keyword>
<name>FABH_AZOSB</name>